<protein>
    <recommendedName>
        <fullName evidence="8 9">Sister-chromatid cohesion protein 3</fullName>
        <shortName evidence="8 9">AtSCC3</shortName>
    </recommendedName>
    <alternativeName>
        <fullName evidence="10">Stromalin protein</fullName>
    </alternativeName>
</protein>
<name>SCC3_ARATH</name>
<dbReference type="EMBL" id="AJ242965">
    <property type="protein sequence ID" value="CAB45374.1"/>
    <property type="molecule type" value="mRNA"/>
</dbReference>
<dbReference type="EMBL" id="AC005309">
    <property type="protein sequence ID" value="AAC63652.2"/>
    <property type="molecule type" value="Genomic_DNA"/>
</dbReference>
<dbReference type="EMBL" id="AC006072">
    <property type="protein sequence ID" value="AAM15132.1"/>
    <property type="molecule type" value="Genomic_DNA"/>
</dbReference>
<dbReference type="EMBL" id="CP002685">
    <property type="protein sequence ID" value="AEC10920.1"/>
    <property type="molecule type" value="Genomic_DNA"/>
</dbReference>
<dbReference type="EMBL" id="AY063915">
    <property type="protein sequence ID" value="AAL36271.1"/>
    <property type="molecule type" value="mRNA"/>
</dbReference>
<dbReference type="EMBL" id="AY091270">
    <property type="protein sequence ID" value="AAM14209.1"/>
    <property type="molecule type" value="mRNA"/>
</dbReference>
<dbReference type="EMBL" id="AY084846">
    <property type="protein sequence ID" value="AAM61411.1"/>
    <property type="molecule type" value="mRNA"/>
</dbReference>
<dbReference type="PIR" id="H84921">
    <property type="entry name" value="H84921"/>
</dbReference>
<dbReference type="RefSeq" id="NP_566119.1">
    <property type="nucleotide sequence ID" value="NM_130365.4"/>
</dbReference>
<dbReference type="SMR" id="O82265"/>
<dbReference type="BioGRID" id="4745">
    <property type="interactions" value="38"/>
</dbReference>
<dbReference type="FunCoup" id="O82265">
    <property type="interactions" value="4029"/>
</dbReference>
<dbReference type="IntAct" id="O82265">
    <property type="interactions" value="1"/>
</dbReference>
<dbReference type="STRING" id="3702.O82265"/>
<dbReference type="iPTMnet" id="O82265"/>
<dbReference type="PaxDb" id="3702-AT2G47980.1"/>
<dbReference type="ProteomicsDB" id="226596"/>
<dbReference type="EnsemblPlants" id="AT2G47980.1">
    <property type="protein sequence ID" value="AT2G47980.1"/>
    <property type="gene ID" value="AT2G47980"/>
</dbReference>
<dbReference type="GeneID" id="819410"/>
<dbReference type="Gramene" id="AT2G47980.1">
    <property type="protein sequence ID" value="AT2G47980.1"/>
    <property type="gene ID" value="AT2G47980"/>
</dbReference>
<dbReference type="KEGG" id="ath:AT2G47980"/>
<dbReference type="Araport" id="AT2G47980"/>
<dbReference type="TAIR" id="AT2G47980">
    <property type="gene designation" value="SCC3"/>
</dbReference>
<dbReference type="eggNOG" id="KOG2011">
    <property type="taxonomic scope" value="Eukaryota"/>
</dbReference>
<dbReference type="HOGENOM" id="CLU_004086_0_0_1"/>
<dbReference type="InParanoid" id="O82265"/>
<dbReference type="OMA" id="QIQEAAY"/>
<dbReference type="OrthoDB" id="498590at2759"/>
<dbReference type="PhylomeDB" id="O82265"/>
<dbReference type="CD-CODE" id="4299E36E">
    <property type="entry name" value="Nucleolus"/>
</dbReference>
<dbReference type="PRO" id="PR:O82265"/>
<dbReference type="Proteomes" id="UP000006548">
    <property type="component" value="Chromosome 2"/>
</dbReference>
<dbReference type="ExpressionAtlas" id="O82265">
    <property type="expression patterns" value="baseline and differential"/>
</dbReference>
<dbReference type="GO" id="GO:0005694">
    <property type="term" value="C:chromosome"/>
    <property type="evidence" value="ECO:0000314"/>
    <property type="project" value="TAIR"/>
</dbReference>
<dbReference type="GO" id="GO:0005634">
    <property type="term" value="C:nucleus"/>
    <property type="evidence" value="ECO:0000314"/>
    <property type="project" value="TAIR"/>
</dbReference>
<dbReference type="GO" id="GO:0051301">
    <property type="term" value="P:cell division"/>
    <property type="evidence" value="ECO:0007669"/>
    <property type="project" value="UniProtKB-KW"/>
</dbReference>
<dbReference type="GO" id="GO:0051754">
    <property type="term" value="P:meiotic sister chromatid cohesion, centromeric"/>
    <property type="evidence" value="ECO:0000315"/>
    <property type="project" value="TAIR"/>
</dbReference>
<dbReference type="GO" id="GO:0000278">
    <property type="term" value="P:mitotic cell cycle"/>
    <property type="evidence" value="ECO:0000315"/>
    <property type="project" value="TAIR"/>
</dbReference>
<dbReference type="GO" id="GO:0051455">
    <property type="term" value="P:spindle attachment to meiosis I kinetochore"/>
    <property type="evidence" value="ECO:0000315"/>
    <property type="project" value="TAIR"/>
</dbReference>
<dbReference type="FunFam" id="1.25.10.10:FF:001547">
    <property type="entry name" value="Uncharacterized protein"/>
    <property type="match status" value="1"/>
</dbReference>
<dbReference type="InterPro" id="IPR016024">
    <property type="entry name" value="ARM-type_fold"/>
</dbReference>
<dbReference type="InterPro" id="IPR039662">
    <property type="entry name" value="Cohesin_Scc3/SA"/>
</dbReference>
<dbReference type="InterPro" id="IPR056396">
    <property type="entry name" value="HEAT_SCC3-SA"/>
</dbReference>
<dbReference type="InterPro" id="IPR020839">
    <property type="entry name" value="SCD"/>
</dbReference>
<dbReference type="InterPro" id="IPR013721">
    <property type="entry name" value="STAG"/>
</dbReference>
<dbReference type="PANTHER" id="PTHR11199:SF0">
    <property type="entry name" value="LD34181P-RELATED"/>
    <property type="match status" value="1"/>
</dbReference>
<dbReference type="PANTHER" id="PTHR11199">
    <property type="entry name" value="STROMAL ANTIGEN"/>
    <property type="match status" value="1"/>
</dbReference>
<dbReference type="Pfam" id="PF24571">
    <property type="entry name" value="HEAT_SCC3-SA"/>
    <property type="match status" value="1"/>
</dbReference>
<dbReference type="Pfam" id="PF21581">
    <property type="entry name" value="SCD"/>
    <property type="match status" value="1"/>
</dbReference>
<dbReference type="Pfam" id="PF08514">
    <property type="entry name" value="STAG"/>
    <property type="match status" value="1"/>
</dbReference>
<dbReference type="SUPFAM" id="SSF48371">
    <property type="entry name" value="ARM repeat"/>
    <property type="match status" value="1"/>
</dbReference>
<dbReference type="PROSITE" id="PS51425">
    <property type="entry name" value="SCD"/>
    <property type="match status" value="1"/>
</dbReference>
<reference key="1">
    <citation type="submission" date="1999-06" db="EMBL/GenBank/DDBJ databases">
        <title>Molecular cloning and expression of stromalin protein from Arabidopsis thaliana.</title>
        <authorList>
            <person name="Valdeolmillos A."/>
            <person name="Barbero J."/>
        </authorList>
    </citation>
    <scope>NUCLEOTIDE SEQUENCE [MRNA]</scope>
    <source>
        <strain>cv. Columbia</strain>
    </source>
</reference>
<reference key="2">
    <citation type="journal article" date="1999" name="Nature">
        <title>Sequence and analysis of chromosome 2 of the plant Arabidopsis thaliana.</title>
        <authorList>
            <person name="Lin X."/>
            <person name="Kaul S."/>
            <person name="Rounsley S.D."/>
            <person name="Shea T.P."/>
            <person name="Benito M.-I."/>
            <person name="Town C.D."/>
            <person name="Fujii C.Y."/>
            <person name="Mason T.M."/>
            <person name="Bowman C.L."/>
            <person name="Barnstead M.E."/>
            <person name="Feldblyum T.V."/>
            <person name="Buell C.R."/>
            <person name="Ketchum K.A."/>
            <person name="Lee J.J."/>
            <person name="Ronning C.M."/>
            <person name="Koo H.L."/>
            <person name="Moffat K.S."/>
            <person name="Cronin L.A."/>
            <person name="Shen M."/>
            <person name="Pai G."/>
            <person name="Van Aken S."/>
            <person name="Umayam L."/>
            <person name="Tallon L.J."/>
            <person name="Gill J.E."/>
            <person name="Adams M.D."/>
            <person name="Carrera A.J."/>
            <person name="Creasy T.H."/>
            <person name="Goodman H.M."/>
            <person name="Somerville C.R."/>
            <person name="Copenhaver G.P."/>
            <person name="Preuss D."/>
            <person name="Nierman W.C."/>
            <person name="White O."/>
            <person name="Eisen J.A."/>
            <person name="Salzberg S.L."/>
            <person name="Fraser C.M."/>
            <person name="Venter J.C."/>
        </authorList>
    </citation>
    <scope>NUCLEOTIDE SEQUENCE [LARGE SCALE GENOMIC DNA]</scope>
    <source>
        <strain>cv. Columbia</strain>
    </source>
</reference>
<reference key="3">
    <citation type="journal article" date="2017" name="Plant J.">
        <title>Araport11: a complete reannotation of the Arabidopsis thaliana reference genome.</title>
        <authorList>
            <person name="Cheng C.Y."/>
            <person name="Krishnakumar V."/>
            <person name="Chan A.P."/>
            <person name="Thibaud-Nissen F."/>
            <person name="Schobel S."/>
            <person name="Town C.D."/>
        </authorList>
    </citation>
    <scope>GENOME REANNOTATION</scope>
    <source>
        <strain>cv. Columbia</strain>
    </source>
</reference>
<reference key="4">
    <citation type="journal article" date="2003" name="Science">
        <title>Empirical analysis of transcriptional activity in the Arabidopsis genome.</title>
        <authorList>
            <person name="Yamada K."/>
            <person name="Lim J."/>
            <person name="Dale J.M."/>
            <person name="Chen H."/>
            <person name="Shinn P."/>
            <person name="Palm C.J."/>
            <person name="Southwick A.M."/>
            <person name="Wu H.C."/>
            <person name="Kim C.J."/>
            <person name="Nguyen M."/>
            <person name="Pham P.K."/>
            <person name="Cheuk R.F."/>
            <person name="Karlin-Newmann G."/>
            <person name="Liu S.X."/>
            <person name="Lam B."/>
            <person name="Sakano H."/>
            <person name="Wu T."/>
            <person name="Yu G."/>
            <person name="Miranda M."/>
            <person name="Quach H.L."/>
            <person name="Tripp M."/>
            <person name="Chang C.H."/>
            <person name="Lee J.M."/>
            <person name="Toriumi M.J."/>
            <person name="Chan M.M."/>
            <person name="Tang C.C."/>
            <person name="Onodera C.S."/>
            <person name="Deng J.M."/>
            <person name="Akiyama K."/>
            <person name="Ansari Y."/>
            <person name="Arakawa T."/>
            <person name="Banh J."/>
            <person name="Banno F."/>
            <person name="Bowser L."/>
            <person name="Brooks S.Y."/>
            <person name="Carninci P."/>
            <person name="Chao Q."/>
            <person name="Choy N."/>
            <person name="Enju A."/>
            <person name="Goldsmith A.D."/>
            <person name="Gurjal M."/>
            <person name="Hansen N.F."/>
            <person name="Hayashizaki Y."/>
            <person name="Johnson-Hopson C."/>
            <person name="Hsuan V.W."/>
            <person name="Iida K."/>
            <person name="Karnes M."/>
            <person name="Khan S."/>
            <person name="Koesema E."/>
            <person name="Ishida J."/>
            <person name="Jiang P.X."/>
            <person name="Jones T."/>
            <person name="Kawai J."/>
            <person name="Kamiya A."/>
            <person name="Meyers C."/>
            <person name="Nakajima M."/>
            <person name="Narusaka M."/>
            <person name="Seki M."/>
            <person name="Sakurai T."/>
            <person name="Satou M."/>
            <person name="Tamse R."/>
            <person name="Vaysberg M."/>
            <person name="Wallender E.K."/>
            <person name="Wong C."/>
            <person name="Yamamura Y."/>
            <person name="Yuan S."/>
            <person name="Shinozaki K."/>
            <person name="Davis R.W."/>
            <person name="Theologis A."/>
            <person name="Ecker J.R."/>
        </authorList>
    </citation>
    <scope>NUCLEOTIDE SEQUENCE [LARGE SCALE MRNA]</scope>
    <source>
        <strain>cv. Columbia</strain>
    </source>
</reference>
<reference key="5">
    <citation type="submission" date="2002-03" db="EMBL/GenBank/DDBJ databases">
        <title>Full-length cDNA from Arabidopsis thaliana.</title>
        <authorList>
            <person name="Brover V.V."/>
            <person name="Troukhan M.E."/>
            <person name="Alexandrov N.A."/>
            <person name="Lu Y.-P."/>
            <person name="Flavell R.B."/>
            <person name="Feldmann K.A."/>
        </authorList>
    </citation>
    <scope>NUCLEOTIDE SEQUENCE [LARGE SCALE MRNA]</scope>
</reference>
<reference key="6">
    <citation type="journal article" date="2001" name="Genome Biol.">
        <title>The cohesin complex: sequence homologies, interaction networks and shared motifs.</title>
        <authorList>
            <person name="Jones S."/>
            <person name="Sgouros J."/>
        </authorList>
    </citation>
    <scope>GENE FAMILY</scope>
</reference>
<reference key="7">
    <citation type="journal article" date="2005" name="J. Cell Sci.">
        <title>AtREC8 and AtSCC3 are essential to the monopolar orientation of the kinetochores during meiosis.</title>
        <authorList>
            <person name="Chelysheva L."/>
            <person name="Diallo S."/>
            <person name="Vezon D."/>
            <person name="Gendrot G."/>
            <person name="Vrielynck N."/>
            <person name="Belcram K."/>
            <person name="Rocques N."/>
            <person name="Marquez-Lema A."/>
            <person name="Bhatt A.M."/>
            <person name="Horlow C."/>
            <person name="Mercier R."/>
            <person name="Mezard C."/>
            <person name="Grelon M."/>
        </authorList>
    </citation>
    <scope>FUNCTION</scope>
    <scope>DISRUPTION PHENOTYPE</scope>
    <scope>DEVELOPMENTAL STAGE</scope>
    <scope>TISSUE SPECIFICITY</scope>
    <scope>SUBCELLULAR LOCATION</scope>
    <source>
        <strain>cv. Columbia</strain>
        <strain>cv. Wassilewskija</strain>
    </source>
</reference>
<reference key="8">
    <citation type="journal article" date="2009" name="Chromosoma">
        <title>Cohesin gene defects may impair sister chromatid alignment and genome stability in Arabidopsis thaliana.</title>
        <authorList>
            <person name="Schubert V."/>
            <person name="Weissleder A."/>
            <person name="Ali H."/>
            <person name="Fuchs J."/>
            <person name="Lermontova I."/>
            <person name="Meister A."/>
            <person name="Schubert I."/>
        </authorList>
    </citation>
    <scope>FUNCTION</scope>
    <scope>DISRUPTION PHENOTYPE</scope>
    <source>
        <strain>cv. Columbia</strain>
    </source>
</reference>
<reference key="9">
    <citation type="journal article" date="2009" name="Plant Physiol.">
        <title>Large-scale Arabidopsis phosphoproteome profiling reveals novel chloroplast kinase substrates and phosphorylation networks.</title>
        <authorList>
            <person name="Reiland S."/>
            <person name="Messerli G."/>
            <person name="Baerenfaller K."/>
            <person name="Gerrits B."/>
            <person name="Endler A."/>
            <person name="Grossmann J."/>
            <person name="Gruissem W."/>
            <person name="Baginsky S."/>
        </authorList>
    </citation>
    <scope>IDENTIFICATION BY MASS SPECTROMETRY [LARGE SCALE ANALYSIS]</scope>
</reference>
<reference key="10">
    <citation type="journal article" date="2014" name="Plant Cell">
        <title>A DEK domain-containing protein modulates chromatin structure and function in Arabidopsis.</title>
        <authorList>
            <person name="Waidmann S."/>
            <person name="Kusenda B."/>
            <person name="Mayerhofer J."/>
            <person name="Mechtler K."/>
            <person name="Jonak C."/>
        </authorList>
    </citation>
    <scope>INTERACTION WITH DEK3</scope>
    <scope>IDENTIFICATION BY MASS SPECTROMETRY</scope>
    <source>
        <strain>cv. Columbia</strain>
    </source>
</reference>
<comment type="function">
    <text evidence="5 6">Essential component of cohesin complex, a complex required for the cohesion of sister chromatids after DNA replication. The cohesin complex apparently forms a large proteinaceous ring within which sister chromatids can be trapped. At anaphase, the complex is cleaved and dissociates from chromatin, allowing sister chromatids to segregate. The cohesin complex may also play a role in spindle pole assembly during mitosis. Required for centromere cohesion maintenance at anaphase I and for the monopolar orientation of the kinetochores during both male and female meiosis. Also involved in mitosis.</text>
</comment>
<comment type="subunit">
    <text evidence="1 7">Part of the cohesin complex. Interacts with DEK3 (PubMed:25387881).</text>
</comment>
<comment type="interaction">
    <interactant intactId="EBI-9397077">
        <id>O82265</id>
    </interactant>
    <interactant intactId="EBI-1787282">
        <id>Q9SUA1</id>
        <label>DEK3</label>
    </interactant>
    <organismsDiffer>false</organismsDiffer>
    <experiments>2</experiments>
</comment>
<comment type="subcellular location">
    <subcellularLocation>
        <location evidence="3 5">Nucleus</location>
    </subcellularLocation>
    <subcellularLocation>
        <location evidence="5">Chromosome</location>
    </subcellularLocation>
    <text>In pollen mother cells (PMC), localized in nucleus from meiotic interphase up to and including metaphase I. During interphase, detected as foci in the nucleus. During leptotene and by zygotene and pachytene, localized in condensing chromosomes on chromatin, delineating the chromosome axis. At diplotene and diakinesis, remains on the chromosome axis at lower levels. At metaphase I, confined to the arms of each bivalent chromosomes. Excluded from centromeric regions.</text>
</comment>
<comment type="tissue specificity">
    <text evidence="5">Expressed in roots, mature leaves, buds and seedlings.</text>
</comment>
<comment type="developmental stage">
    <text evidence="5">Expressed in mitotic and meitotic cells. In meiotic nuclei, first detected at interphase, and binds to the chromosome axis from early leptotene through to anaphase I.</text>
</comment>
<comment type="disruption phenotype">
    <text evidence="5 6">The null allele scc3-2 is embryo lethal. The weak allele scc3-1 exhibits mitotic and meiotic defects. Heterozygote plants are dwarf and partly sterile. Reduced chromatid alignment during interphase.</text>
</comment>
<comment type="similarity">
    <text evidence="11">Belongs to the SCC3 family.</text>
</comment>
<organism>
    <name type="scientific">Arabidopsis thaliana</name>
    <name type="common">Mouse-ear cress</name>
    <dbReference type="NCBI Taxonomy" id="3702"/>
    <lineage>
        <taxon>Eukaryota</taxon>
        <taxon>Viridiplantae</taxon>
        <taxon>Streptophyta</taxon>
        <taxon>Embryophyta</taxon>
        <taxon>Tracheophyta</taxon>
        <taxon>Spermatophyta</taxon>
        <taxon>Magnoliopsida</taxon>
        <taxon>eudicotyledons</taxon>
        <taxon>Gunneridae</taxon>
        <taxon>Pentapetalae</taxon>
        <taxon>rosids</taxon>
        <taxon>malvids</taxon>
        <taxon>Brassicales</taxon>
        <taxon>Brassicaceae</taxon>
        <taxon>Camelineae</taxon>
        <taxon>Arabidopsis</taxon>
    </lineage>
</organism>
<proteinExistence type="evidence at protein level"/>
<accession>O82265</accession>
<accession>Q8LFH0</accession>
<accession>Q9XGM9</accession>
<gene>
    <name evidence="8 9" type="primary">SCC3</name>
    <name evidence="10" type="synonym">SA</name>
    <name evidence="12" type="ordered locus">At2g47980</name>
    <name evidence="13" type="ORF">T9J23.3</name>
</gene>
<evidence type="ECO:0000250" key="1"/>
<evidence type="ECO:0000255" key="2"/>
<evidence type="ECO:0000255" key="3">
    <source>
        <dbReference type="PROSITE-ProRule" id="PRU00750"/>
    </source>
</evidence>
<evidence type="ECO:0000256" key="4">
    <source>
        <dbReference type="SAM" id="MobiDB-lite"/>
    </source>
</evidence>
<evidence type="ECO:0000269" key="5">
    <source>
    </source>
</evidence>
<evidence type="ECO:0000269" key="6">
    <source>
    </source>
</evidence>
<evidence type="ECO:0000269" key="7">
    <source>
    </source>
</evidence>
<evidence type="ECO:0000303" key="8">
    <source>
    </source>
</evidence>
<evidence type="ECO:0000303" key="9">
    <source>
    </source>
</evidence>
<evidence type="ECO:0000303" key="10">
    <source ref="1"/>
</evidence>
<evidence type="ECO:0000305" key="11"/>
<evidence type="ECO:0000312" key="12">
    <source>
        <dbReference type="Araport" id="AT2G47980"/>
    </source>
</evidence>
<evidence type="ECO:0000312" key="13">
    <source>
        <dbReference type="EMBL" id="AAM15132.1"/>
    </source>
</evidence>
<keyword id="KW-0131">Cell cycle</keyword>
<keyword id="KW-0132">Cell division</keyword>
<keyword id="KW-0158">Chromosome</keyword>
<keyword id="KW-0159">Chromosome partition</keyword>
<keyword id="KW-0175">Coiled coil</keyword>
<keyword id="KW-0498">Mitosis</keyword>
<keyword id="KW-0539">Nucleus</keyword>
<keyword id="KW-1185">Reference proteome</keyword>
<sequence>MEDSPQGLKRSRDPDQDQDDDSGEAGKADGSGGENQERSSDQIELDDDDFQETRPKPKRSRTHPPQQNLIEVVKGNGDLISKAVKIWVERYEDSPSLATTELLSMLFQACGAKYSIKDDLLDETDVDDVVVSLVNLARAGELEDYQSSRKKELKNFKENLVSFWNNLIIECQNGPLFDRVLFDKCMDYIIALSCTPPRVYRQTATLMGLQLVTSFISVANTLGSQRETTQRQLNAESKKRADGPRVDSLNKRLSVTHEQITTLEDMMRKIFTGLFVHRYRDIDNDIRMSCIQSLGIWILSYPSLFLQDLYLKYLGWTLNDKNAGVRKASLLALQKLYEMDENVPTLGLFTQRFSNRMIEMADDVDMSAAVCAIGLVKQLLRHQLIPDDDLGPLYDLLIDQPQEIRRAIGELVYDHLIAQKFNSSPSSLTGHDDSSSEIHIFRMLQILREFSTDPILCVYVIDDVWEYMKAMKDWKCIISMLLDQNPRTGSTTDEDSTNLIRLLFVSIRKAVGEKIIPSTDNRKQYHSKAQREIFENNRKDITVAMMKNYPQLLRKFMADKAKVSSLVEIIIFMKLELYSLKRQEQSFKAAVRLIKDAFFKHGEKEALRSCVKAITFCASESKGELQDFSRGKLKDLEDELLDKITSAIREVKDGNDEYSLLVNLKRLYELQLSKPVLVESMFDEIALTLHNFRNLDEEVICFLLLNMHMYLAWYLHSIINCEAISEASLSSLISKRDTLFEELSYFLNGIEESKKYGNQLSNRICAILAETWCLFRKSNYDSGKLERLGYCPDSVFLEKFWKLCAEMFNTSDETDEEDENKEYIEETNRDVSVIAACKLVASDVVPKDYLGPEIISHLGMHGPGVTGIIKNLITFLRKKEDDISNIYLESLKRAYHRYSSELSSGREESRVDKCLEEWRELAGGLSGMYIGAARNKYRLEILSVVKEGVEFAFRDAPKQLLFLEVAILPFATRLSVSDIIDIKKDVQGRIVHVNTDEDPSGWRPCFTFLETLEEKCLKNEDLQDDKEAANVRRRGRPRKRPETERKRLFDEQSGSDEDESISGGSDREDKLDEDAPLIETIRSAARRKALKGERSKGH</sequence>
<feature type="chain" id="PRO_0000425660" description="Sister-chromatid cohesion protein 3">
    <location>
        <begin position="1"/>
        <end position="1098"/>
    </location>
</feature>
<feature type="domain" description="SCD" evidence="3">
    <location>
        <begin position="275"/>
        <end position="360"/>
    </location>
</feature>
<feature type="region of interest" description="Disordered" evidence="4">
    <location>
        <begin position="1"/>
        <end position="68"/>
    </location>
</feature>
<feature type="region of interest" description="Disordered" evidence="4">
    <location>
        <begin position="1027"/>
        <end position="1077"/>
    </location>
</feature>
<feature type="coiled-coil region" evidence="2">
    <location>
        <begin position="245"/>
        <end position="265"/>
    </location>
</feature>
<feature type="coiled-coil region" evidence="2">
    <location>
        <begin position="632"/>
        <end position="653"/>
    </location>
</feature>
<feature type="coiled-coil region" evidence="2">
    <location>
        <begin position="888"/>
        <end position="908"/>
    </location>
</feature>
<feature type="coiled-coil region" evidence="2">
    <location>
        <begin position="1009"/>
        <end position="1032"/>
    </location>
</feature>
<feature type="compositionally biased region" description="Basic and acidic residues" evidence="4">
    <location>
        <begin position="1040"/>
        <end position="1050"/>
    </location>
</feature>
<feature type="sequence conflict" description="In Ref. 5; AAM61411." evidence="11" ref="5">
    <original>S</original>
    <variation>I</variation>
    <location>
        <position position="621"/>
    </location>
</feature>